<keyword id="KW-0963">Cytoplasm</keyword>
<keyword id="KW-0597">Phosphoprotein</keyword>
<keyword id="KW-1185">Reference proteome</keyword>
<comment type="function">
    <text evidence="1">Covalent carrier of the coenzyme of citrate lyase.</text>
</comment>
<comment type="subunit">
    <text evidence="1">Oligomer with a subunit composition of (alpha,beta,gamma)6.</text>
</comment>
<comment type="subcellular location">
    <subcellularLocation>
        <location evidence="1">Cytoplasm</location>
    </subcellularLocation>
</comment>
<comment type="similarity">
    <text evidence="1">Belongs to the CitD family.</text>
</comment>
<proteinExistence type="inferred from homology"/>
<accession>Q7CQZ6</accession>
<sequence>MKINQLAVAGTLESGDVMIRIAPLDTQDIDLQINSSVEKQFGEAIRATILEVLSRYDVRGVQLNVDDKGALDCILRARLETLLARASGIAALPWEDRQ</sequence>
<organism>
    <name type="scientific">Salmonella typhimurium (strain LT2 / SGSC1412 / ATCC 700720)</name>
    <dbReference type="NCBI Taxonomy" id="99287"/>
    <lineage>
        <taxon>Bacteria</taxon>
        <taxon>Pseudomonadati</taxon>
        <taxon>Pseudomonadota</taxon>
        <taxon>Gammaproteobacteria</taxon>
        <taxon>Enterobacterales</taxon>
        <taxon>Enterobacteriaceae</taxon>
        <taxon>Salmonella</taxon>
    </lineage>
</organism>
<evidence type="ECO:0000255" key="1">
    <source>
        <dbReference type="HAMAP-Rule" id="MF_00805"/>
    </source>
</evidence>
<feature type="chain" id="PRO_0000214709" description="Citrate lyase acyl carrier protein 1">
    <location>
        <begin position="1"/>
        <end position="98"/>
    </location>
</feature>
<feature type="modified residue" description="O-(phosphoribosyl dephospho-coenzyme A)serine" evidence="1">
    <location>
        <position position="14"/>
    </location>
</feature>
<dbReference type="EMBL" id="AE006468">
    <property type="protein sequence ID" value="AAL19574.1"/>
    <property type="molecule type" value="Genomic_DNA"/>
</dbReference>
<dbReference type="RefSeq" id="NP_459615.1">
    <property type="nucleotide sequence ID" value="NC_003197.2"/>
</dbReference>
<dbReference type="RefSeq" id="WP_000700679.1">
    <property type="nucleotide sequence ID" value="NC_003197.2"/>
</dbReference>
<dbReference type="SMR" id="Q7CQZ6"/>
<dbReference type="STRING" id="99287.STM0623"/>
<dbReference type="PaxDb" id="99287-STM0623"/>
<dbReference type="GeneID" id="1252143"/>
<dbReference type="KEGG" id="stm:STM0623"/>
<dbReference type="PATRIC" id="fig|99287.12.peg.656"/>
<dbReference type="HOGENOM" id="CLU_158489_0_0_6"/>
<dbReference type="PhylomeDB" id="Q7CQZ6"/>
<dbReference type="BioCyc" id="SENT99287:STM0623-MONOMER"/>
<dbReference type="Proteomes" id="UP000001014">
    <property type="component" value="Chromosome"/>
</dbReference>
<dbReference type="GO" id="GO:0005737">
    <property type="term" value="C:cytoplasm"/>
    <property type="evidence" value="ECO:0007669"/>
    <property type="project" value="UniProtKB-SubCell"/>
</dbReference>
<dbReference type="HAMAP" id="MF_00805">
    <property type="entry name" value="CitD"/>
    <property type="match status" value="1"/>
</dbReference>
<dbReference type="InterPro" id="IPR006495">
    <property type="entry name" value="CitD"/>
</dbReference>
<dbReference type="InterPro" id="IPR023439">
    <property type="entry name" value="Mal_deCO2ase/Cit_lyase_ACP"/>
</dbReference>
<dbReference type="NCBIfam" id="TIGR01608">
    <property type="entry name" value="citD"/>
    <property type="match status" value="1"/>
</dbReference>
<dbReference type="NCBIfam" id="NF009726">
    <property type="entry name" value="PRK13253.1"/>
    <property type="match status" value="1"/>
</dbReference>
<dbReference type="Pfam" id="PF06857">
    <property type="entry name" value="ACP"/>
    <property type="match status" value="1"/>
</dbReference>
<dbReference type="PIRSF" id="PIRSF002736">
    <property type="entry name" value="Citrt_lyas_gamma"/>
    <property type="match status" value="1"/>
</dbReference>
<name>CITD1_SALTY</name>
<reference key="1">
    <citation type="journal article" date="2001" name="Nature">
        <title>Complete genome sequence of Salmonella enterica serovar Typhimurium LT2.</title>
        <authorList>
            <person name="McClelland M."/>
            <person name="Sanderson K.E."/>
            <person name="Spieth J."/>
            <person name="Clifton S.W."/>
            <person name="Latreille P."/>
            <person name="Courtney L."/>
            <person name="Porwollik S."/>
            <person name="Ali J."/>
            <person name="Dante M."/>
            <person name="Du F."/>
            <person name="Hou S."/>
            <person name="Layman D."/>
            <person name="Leonard S."/>
            <person name="Nguyen C."/>
            <person name="Scott K."/>
            <person name="Holmes A."/>
            <person name="Grewal N."/>
            <person name="Mulvaney E."/>
            <person name="Ryan E."/>
            <person name="Sun H."/>
            <person name="Florea L."/>
            <person name="Miller W."/>
            <person name="Stoneking T."/>
            <person name="Nhan M."/>
            <person name="Waterston R."/>
            <person name="Wilson R.K."/>
        </authorList>
    </citation>
    <scope>NUCLEOTIDE SEQUENCE [LARGE SCALE GENOMIC DNA]</scope>
    <source>
        <strain>LT2 / SGSC1412 / ATCC 700720</strain>
    </source>
</reference>
<gene>
    <name evidence="1" type="primary">citD1</name>
    <name type="synonym">citD</name>
    <name type="ordered locus">STM0623</name>
</gene>
<protein>
    <recommendedName>
        <fullName evidence="1">Citrate lyase acyl carrier protein 1</fullName>
    </recommendedName>
    <alternativeName>
        <fullName evidence="1">Citrate lyase gamma chain 1</fullName>
    </alternativeName>
</protein>